<protein>
    <recommendedName>
        <fullName evidence="1">NH(3)-dependent NAD(+) synthetase</fullName>
        <ecNumber evidence="1">6.3.1.5</ecNumber>
    </recommendedName>
</protein>
<sequence>MRKYQEEIINALGVNSQIDPQAEVTKRVQFICDFLQTTKMKALVLGISGGQDSSLAGRLSQLAVEKLREETGDNEYQFIAVRLPYGEQADESDAMFAINDFIKPDKIMRVNIKAATDAMVASLNEAGTPISDFSKGNIKARERMIVQYAIGGENKGAVVGTDHAAEAVTGFYTKFGDGGADITPLSGLDKRQGKALLQYLGAPAKLYDKTPTADLEEDKPMRPDEEALGVRYDEIDDYLEGREVSPAAAEKIESWYRRTQHKRHLPIAPYDTWWK</sequence>
<keyword id="KW-0067">ATP-binding</keyword>
<keyword id="KW-0436">Ligase</keyword>
<keyword id="KW-0460">Magnesium</keyword>
<keyword id="KW-0479">Metal-binding</keyword>
<keyword id="KW-0520">NAD</keyword>
<keyword id="KW-0547">Nucleotide-binding</keyword>
<keyword id="KW-1185">Reference proteome</keyword>
<name>NADE_LIMRD</name>
<accession>A5VI81</accession>
<organism>
    <name type="scientific">Limosilactobacillus reuteri (strain DSM 20016)</name>
    <name type="common">Lactobacillus reuteri</name>
    <dbReference type="NCBI Taxonomy" id="557436"/>
    <lineage>
        <taxon>Bacteria</taxon>
        <taxon>Bacillati</taxon>
        <taxon>Bacillota</taxon>
        <taxon>Bacilli</taxon>
        <taxon>Lactobacillales</taxon>
        <taxon>Lactobacillaceae</taxon>
        <taxon>Limosilactobacillus</taxon>
    </lineage>
</organism>
<gene>
    <name evidence="1" type="primary">nadE</name>
    <name type="ordered locus">Lreu_0285</name>
</gene>
<feature type="chain" id="PRO_1000077569" description="NH(3)-dependent NAD(+) synthetase">
    <location>
        <begin position="1"/>
        <end position="275"/>
    </location>
</feature>
<feature type="binding site" evidence="1">
    <location>
        <begin position="46"/>
        <end position="53"/>
    </location>
    <ligand>
        <name>ATP</name>
        <dbReference type="ChEBI" id="CHEBI:30616"/>
    </ligand>
</feature>
<feature type="binding site" evidence="1">
    <location>
        <position position="52"/>
    </location>
    <ligand>
        <name>Mg(2+)</name>
        <dbReference type="ChEBI" id="CHEBI:18420"/>
    </ligand>
</feature>
<feature type="binding site" evidence="1">
    <location>
        <position position="141"/>
    </location>
    <ligand>
        <name>deamido-NAD(+)</name>
        <dbReference type="ChEBI" id="CHEBI:58437"/>
    </ligand>
</feature>
<feature type="binding site" evidence="1">
    <location>
        <position position="161"/>
    </location>
    <ligand>
        <name>ATP</name>
        <dbReference type="ChEBI" id="CHEBI:30616"/>
    </ligand>
</feature>
<feature type="binding site" evidence="1">
    <location>
        <position position="166"/>
    </location>
    <ligand>
        <name>Mg(2+)</name>
        <dbReference type="ChEBI" id="CHEBI:18420"/>
    </ligand>
</feature>
<feature type="binding site" evidence="1">
    <location>
        <position position="174"/>
    </location>
    <ligand>
        <name>deamido-NAD(+)</name>
        <dbReference type="ChEBI" id="CHEBI:58437"/>
    </ligand>
</feature>
<feature type="binding site" evidence="1">
    <location>
        <position position="181"/>
    </location>
    <ligand>
        <name>deamido-NAD(+)</name>
        <dbReference type="ChEBI" id="CHEBI:58437"/>
    </ligand>
</feature>
<feature type="binding site" evidence="1">
    <location>
        <position position="190"/>
    </location>
    <ligand>
        <name>ATP</name>
        <dbReference type="ChEBI" id="CHEBI:30616"/>
    </ligand>
</feature>
<feature type="binding site" evidence="1">
    <location>
        <position position="212"/>
    </location>
    <ligand>
        <name>ATP</name>
        <dbReference type="ChEBI" id="CHEBI:30616"/>
    </ligand>
</feature>
<feature type="binding site" evidence="1">
    <location>
        <begin position="261"/>
        <end position="262"/>
    </location>
    <ligand>
        <name>deamido-NAD(+)</name>
        <dbReference type="ChEBI" id="CHEBI:58437"/>
    </ligand>
</feature>
<reference key="1">
    <citation type="journal article" date="2011" name="PLoS Genet.">
        <title>The evolution of host specialization in the vertebrate gut symbiont Lactobacillus reuteri.</title>
        <authorList>
            <person name="Frese S.A."/>
            <person name="Benson A.K."/>
            <person name="Tannock G.W."/>
            <person name="Loach D.M."/>
            <person name="Kim J."/>
            <person name="Zhang M."/>
            <person name="Oh P.L."/>
            <person name="Heng N.C."/>
            <person name="Patil P.B."/>
            <person name="Juge N."/>
            <person name="Mackenzie D.A."/>
            <person name="Pearson B.M."/>
            <person name="Lapidus A."/>
            <person name="Dalin E."/>
            <person name="Tice H."/>
            <person name="Goltsman E."/>
            <person name="Land M."/>
            <person name="Hauser L."/>
            <person name="Ivanova N."/>
            <person name="Kyrpides N.C."/>
            <person name="Walter J."/>
        </authorList>
    </citation>
    <scope>NUCLEOTIDE SEQUENCE [LARGE SCALE GENOMIC DNA]</scope>
    <source>
        <strain>DSM 20016</strain>
    </source>
</reference>
<dbReference type="EC" id="6.3.1.5" evidence="1"/>
<dbReference type="EMBL" id="CP000705">
    <property type="protein sequence ID" value="ABQ82555.1"/>
    <property type="molecule type" value="Genomic_DNA"/>
</dbReference>
<dbReference type="RefSeq" id="WP_003667309.1">
    <property type="nucleotide sequence ID" value="NC_009513.1"/>
</dbReference>
<dbReference type="SMR" id="A5VI81"/>
<dbReference type="STRING" id="557436.Lreu_0285"/>
<dbReference type="KEGG" id="lre:Lreu_0285"/>
<dbReference type="PATRIC" id="fig|557436.17.peg.1928"/>
<dbReference type="eggNOG" id="COG0171">
    <property type="taxonomic scope" value="Bacteria"/>
</dbReference>
<dbReference type="HOGENOM" id="CLU_059327_3_0_9"/>
<dbReference type="UniPathway" id="UPA00253">
    <property type="reaction ID" value="UER00333"/>
</dbReference>
<dbReference type="Proteomes" id="UP000001991">
    <property type="component" value="Chromosome"/>
</dbReference>
<dbReference type="GO" id="GO:0005737">
    <property type="term" value="C:cytoplasm"/>
    <property type="evidence" value="ECO:0007669"/>
    <property type="project" value="InterPro"/>
</dbReference>
<dbReference type="GO" id="GO:0005524">
    <property type="term" value="F:ATP binding"/>
    <property type="evidence" value="ECO:0007669"/>
    <property type="project" value="UniProtKB-UniRule"/>
</dbReference>
<dbReference type="GO" id="GO:0004359">
    <property type="term" value="F:glutaminase activity"/>
    <property type="evidence" value="ECO:0007669"/>
    <property type="project" value="InterPro"/>
</dbReference>
<dbReference type="GO" id="GO:0046872">
    <property type="term" value="F:metal ion binding"/>
    <property type="evidence" value="ECO:0007669"/>
    <property type="project" value="UniProtKB-KW"/>
</dbReference>
<dbReference type="GO" id="GO:0003952">
    <property type="term" value="F:NAD+ synthase (glutamine-hydrolyzing) activity"/>
    <property type="evidence" value="ECO:0007669"/>
    <property type="project" value="InterPro"/>
</dbReference>
<dbReference type="GO" id="GO:0008795">
    <property type="term" value="F:NAD+ synthase activity"/>
    <property type="evidence" value="ECO:0007669"/>
    <property type="project" value="UniProtKB-UniRule"/>
</dbReference>
<dbReference type="GO" id="GO:0009435">
    <property type="term" value="P:NAD biosynthetic process"/>
    <property type="evidence" value="ECO:0007669"/>
    <property type="project" value="UniProtKB-UniRule"/>
</dbReference>
<dbReference type="CDD" id="cd00553">
    <property type="entry name" value="NAD_synthase"/>
    <property type="match status" value="1"/>
</dbReference>
<dbReference type="FunFam" id="3.40.50.620:FF:000015">
    <property type="entry name" value="NH(3)-dependent NAD(+) synthetase"/>
    <property type="match status" value="1"/>
</dbReference>
<dbReference type="Gene3D" id="3.40.50.620">
    <property type="entry name" value="HUPs"/>
    <property type="match status" value="1"/>
</dbReference>
<dbReference type="HAMAP" id="MF_00193">
    <property type="entry name" value="NadE_ammonia_dep"/>
    <property type="match status" value="1"/>
</dbReference>
<dbReference type="InterPro" id="IPR022310">
    <property type="entry name" value="NAD/GMP_synthase"/>
</dbReference>
<dbReference type="InterPro" id="IPR003694">
    <property type="entry name" value="NAD_synthase"/>
</dbReference>
<dbReference type="InterPro" id="IPR022926">
    <property type="entry name" value="NH(3)-dep_NAD(+)_synth"/>
</dbReference>
<dbReference type="InterPro" id="IPR014729">
    <property type="entry name" value="Rossmann-like_a/b/a_fold"/>
</dbReference>
<dbReference type="NCBIfam" id="TIGR00552">
    <property type="entry name" value="nadE"/>
    <property type="match status" value="1"/>
</dbReference>
<dbReference type="NCBIfam" id="NF001979">
    <property type="entry name" value="PRK00768.1"/>
    <property type="match status" value="1"/>
</dbReference>
<dbReference type="PANTHER" id="PTHR23090">
    <property type="entry name" value="NH 3 /GLUTAMINE-DEPENDENT NAD + SYNTHETASE"/>
    <property type="match status" value="1"/>
</dbReference>
<dbReference type="PANTHER" id="PTHR23090:SF7">
    <property type="entry name" value="NH(3)-DEPENDENT NAD(+) SYNTHETASE"/>
    <property type="match status" value="1"/>
</dbReference>
<dbReference type="Pfam" id="PF02540">
    <property type="entry name" value="NAD_synthase"/>
    <property type="match status" value="1"/>
</dbReference>
<dbReference type="SUPFAM" id="SSF52402">
    <property type="entry name" value="Adenine nucleotide alpha hydrolases-like"/>
    <property type="match status" value="1"/>
</dbReference>
<proteinExistence type="inferred from homology"/>
<evidence type="ECO:0000255" key="1">
    <source>
        <dbReference type="HAMAP-Rule" id="MF_00193"/>
    </source>
</evidence>
<comment type="function">
    <text evidence="1">Catalyzes the ATP-dependent amidation of deamido-NAD to form NAD. Uses ammonia as a nitrogen source.</text>
</comment>
<comment type="catalytic activity">
    <reaction evidence="1">
        <text>deamido-NAD(+) + NH4(+) + ATP = AMP + diphosphate + NAD(+) + H(+)</text>
        <dbReference type="Rhea" id="RHEA:21188"/>
        <dbReference type="ChEBI" id="CHEBI:15378"/>
        <dbReference type="ChEBI" id="CHEBI:28938"/>
        <dbReference type="ChEBI" id="CHEBI:30616"/>
        <dbReference type="ChEBI" id="CHEBI:33019"/>
        <dbReference type="ChEBI" id="CHEBI:57540"/>
        <dbReference type="ChEBI" id="CHEBI:58437"/>
        <dbReference type="ChEBI" id="CHEBI:456215"/>
        <dbReference type="EC" id="6.3.1.5"/>
    </reaction>
</comment>
<comment type="pathway">
    <text evidence="1">Cofactor biosynthesis; NAD(+) biosynthesis; NAD(+) from deamido-NAD(+) (ammonia route): step 1/1.</text>
</comment>
<comment type="subunit">
    <text evidence="1">Homodimer.</text>
</comment>
<comment type="similarity">
    <text evidence="1">Belongs to the NAD synthetase family.</text>
</comment>